<accession>B2TU87</accession>
<reference key="1">
    <citation type="submission" date="2008-05" db="EMBL/GenBank/DDBJ databases">
        <title>Complete sequence of Shigella boydii serotype 18 strain BS512.</title>
        <authorList>
            <person name="Rasko D.A."/>
            <person name="Rosovitz M."/>
            <person name="Maurelli A.T."/>
            <person name="Myers G."/>
            <person name="Seshadri R."/>
            <person name="Cer R."/>
            <person name="Jiang L."/>
            <person name="Ravel J."/>
            <person name="Sebastian Y."/>
        </authorList>
    </citation>
    <scope>NUCLEOTIDE SEQUENCE [LARGE SCALE GENOMIC DNA]</scope>
    <source>
        <strain>CDC 3083-94 / BS512</strain>
    </source>
</reference>
<proteinExistence type="inferred from homology"/>
<name>YBED_SHIB3</name>
<keyword id="KW-1185">Reference proteome</keyword>
<gene>
    <name evidence="1" type="primary">ybeD</name>
    <name type="ordered locus">SbBS512_E0620</name>
</gene>
<sequence length="87" mass="9827">MKTKLNELLEFPTPFTYKVMGQALPELVDQVVEVVQRHAPGDYTPTVKPSSKGNYHSVSITINATHIEQVETLYEELGKIDIVRMVL</sequence>
<protein>
    <recommendedName>
        <fullName evidence="1">UPF0250 protein YbeD</fullName>
    </recommendedName>
</protein>
<organism>
    <name type="scientific">Shigella boydii serotype 18 (strain CDC 3083-94 / BS512)</name>
    <dbReference type="NCBI Taxonomy" id="344609"/>
    <lineage>
        <taxon>Bacteria</taxon>
        <taxon>Pseudomonadati</taxon>
        <taxon>Pseudomonadota</taxon>
        <taxon>Gammaproteobacteria</taxon>
        <taxon>Enterobacterales</taxon>
        <taxon>Enterobacteriaceae</taxon>
        <taxon>Shigella</taxon>
    </lineage>
</organism>
<dbReference type="EMBL" id="CP001063">
    <property type="protein sequence ID" value="ACD08097.1"/>
    <property type="molecule type" value="Genomic_DNA"/>
</dbReference>
<dbReference type="RefSeq" id="WP_000850550.1">
    <property type="nucleotide sequence ID" value="NC_010658.1"/>
</dbReference>
<dbReference type="SMR" id="B2TU87"/>
<dbReference type="STRING" id="344609.SbBS512_E0620"/>
<dbReference type="GeneID" id="93776851"/>
<dbReference type="KEGG" id="sbc:SbBS512_E0620"/>
<dbReference type="HOGENOM" id="CLU_161438_2_1_6"/>
<dbReference type="Proteomes" id="UP000001030">
    <property type="component" value="Chromosome"/>
</dbReference>
<dbReference type="GO" id="GO:0005829">
    <property type="term" value="C:cytosol"/>
    <property type="evidence" value="ECO:0007669"/>
    <property type="project" value="TreeGrafter"/>
</dbReference>
<dbReference type="FunFam" id="3.30.70.260:FF:000002">
    <property type="entry name" value="UPF0250 protein YbeD"/>
    <property type="match status" value="1"/>
</dbReference>
<dbReference type="Gene3D" id="3.30.70.260">
    <property type="match status" value="1"/>
</dbReference>
<dbReference type="HAMAP" id="MF_00659">
    <property type="entry name" value="UPF0250"/>
    <property type="match status" value="1"/>
</dbReference>
<dbReference type="InterPro" id="IPR007454">
    <property type="entry name" value="UPF0250_YbeD-like"/>
</dbReference>
<dbReference type="InterPro" id="IPR027471">
    <property type="entry name" value="YbeD-like_sf"/>
</dbReference>
<dbReference type="NCBIfam" id="NF003447">
    <property type="entry name" value="PRK04998.1"/>
    <property type="match status" value="1"/>
</dbReference>
<dbReference type="PANTHER" id="PTHR38036">
    <property type="entry name" value="UPF0250 PROTEIN YBED"/>
    <property type="match status" value="1"/>
</dbReference>
<dbReference type="PANTHER" id="PTHR38036:SF1">
    <property type="entry name" value="UPF0250 PROTEIN YBED"/>
    <property type="match status" value="1"/>
</dbReference>
<dbReference type="Pfam" id="PF04359">
    <property type="entry name" value="DUF493"/>
    <property type="match status" value="1"/>
</dbReference>
<dbReference type="SUPFAM" id="SSF117991">
    <property type="entry name" value="YbeD/HP0495-like"/>
    <property type="match status" value="1"/>
</dbReference>
<comment type="similarity">
    <text evidence="1">Belongs to the UPF0250 family.</text>
</comment>
<evidence type="ECO:0000255" key="1">
    <source>
        <dbReference type="HAMAP-Rule" id="MF_00659"/>
    </source>
</evidence>
<feature type="chain" id="PRO_1000131263" description="UPF0250 protein YbeD">
    <location>
        <begin position="1"/>
        <end position="87"/>
    </location>
</feature>